<accession>A9VT67</accession>
<keyword id="KW-0067">ATP-binding</keyword>
<keyword id="KW-0143">Chaperone</keyword>
<keyword id="KW-0963">Cytoplasm</keyword>
<keyword id="KW-0547">Nucleotide-binding</keyword>
<keyword id="KW-0346">Stress response</keyword>
<evidence type="ECO:0000255" key="1">
    <source>
        <dbReference type="HAMAP-Rule" id="MF_00249"/>
    </source>
</evidence>
<evidence type="ECO:0000256" key="2">
    <source>
        <dbReference type="SAM" id="MobiDB-lite"/>
    </source>
</evidence>
<dbReference type="EMBL" id="CP000903">
    <property type="protein sequence ID" value="ABY44823.1"/>
    <property type="molecule type" value="Genomic_DNA"/>
</dbReference>
<dbReference type="RefSeq" id="WP_002014539.1">
    <property type="nucleotide sequence ID" value="NC_010184.1"/>
</dbReference>
<dbReference type="SMR" id="A9VT67"/>
<dbReference type="GeneID" id="66266607"/>
<dbReference type="KEGG" id="bwe:BcerKBAB4_3652"/>
<dbReference type="eggNOG" id="COG1220">
    <property type="taxonomic scope" value="Bacteria"/>
</dbReference>
<dbReference type="HOGENOM" id="CLU_033123_0_0_9"/>
<dbReference type="Proteomes" id="UP000002154">
    <property type="component" value="Chromosome"/>
</dbReference>
<dbReference type="GO" id="GO:0009376">
    <property type="term" value="C:HslUV protease complex"/>
    <property type="evidence" value="ECO:0007669"/>
    <property type="project" value="UniProtKB-UniRule"/>
</dbReference>
<dbReference type="GO" id="GO:0005524">
    <property type="term" value="F:ATP binding"/>
    <property type="evidence" value="ECO:0007669"/>
    <property type="project" value="UniProtKB-UniRule"/>
</dbReference>
<dbReference type="GO" id="GO:0016887">
    <property type="term" value="F:ATP hydrolysis activity"/>
    <property type="evidence" value="ECO:0007669"/>
    <property type="project" value="InterPro"/>
</dbReference>
<dbReference type="GO" id="GO:0008233">
    <property type="term" value="F:peptidase activity"/>
    <property type="evidence" value="ECO:0007669"/>
    <property type="project" value="InterPro"/>
</dbReference>
<dbReference type="GO" id="GO:0036402">
    <property type="term" value="F:proteasome-activating activity"/>
    <property type="evidence" value="ECO:0007669"/>
    <property type="project" value="UniProtKB-UniRule"/>
</dbReference>
<dbReference type="GO" id="GO:0043335">
    <property type="term" value="P:protein unfolding"/>
    <property type="evidence" value="ECO:0007669"/>
    <property type="project" value="UniProtKB-UniRule"/>
</dbReference>
<dbReference type="GO" id="GO:0051603">
    <property type="term" value="P:proteolysis involved in protein catabolic process"/>
    <property type="evidence" value="ECO:0007669"/>
    <property type="project" value="TreeGrafter"/>
</dbReference>
<dbReference type="CDD" id="cd19498">
    <property type="entry name" value="RecA-like_HslU"/>
    <property type="match status" value="1"/>
</dbReference>
<dbReference type="FunFam" id="3.40.50.300:FF:000220">
    <property type="entry name" value="ATP-dependent protease ATPase subunit HslU"/>
    <property type="match status" value="1"/>
</dbReference>
<dbReference type="Gene3D" id="1.10.8.60">
    <property type="match status" value="1"/>
</dbReference>
<dbReference type="Gene3D" id="3.40.50.300">
    <property type="entry name" value="P-loop containing nucleotide triphosphate hydrolases"/>
    <property type="match status" value="2"/>
</dbReference>
<dbReference type="HAMAP" id="MF_00249">
    <property type="entry name" value="HslU"/>
    <property type="match status" value="1"/>
</dbReference>
<dbReference type="InterPro" id="IPR003593">
    <property type="entry name" value="AAA+_ATPase"/>
</dbReference>
<dbReference type="InterPro" id="IPR050052">
    <property type="entry name" value="ATP-dep_Clp_protease_ClpX"/>
</dbReference>
<dbReference type="InterPro" id="IPR003959">
    <property type="entry name" value="ATPase_AAA_core"/>
</dbReference>
<dbReference type="InterPro" id="IPR019489">
    <property type="entry name" value="Clp_ATPase_C"/>
</dbReference>
<dbReference type="InterPro" id="IPR004491">
    <property type="entry name" value="HslU"/>
</dbReference>
<dbReference type="InterPro" id="IPR027417">
    <property type="entry name" value="P-loop_NTPase"/>
</dbReference>
<dbReference type="NCBIfam" id="TIGR00390">
    <property type="entry name" value="hslU"/>
    <property type="match status" value="1"/>
</dbReference>
<dbReference type="NCBIfam" id="NF003544">
    <property type="entry name" value="PRK05201.1"/>
    <property type="match status" value="1"/>
</dbReference>
<dbReference type="PANTHER" id="PTHR48102">
    <property type="entry name" value="ATP-DEPENDENT CLP PROTEASE ATP-BINDING SUBUNIT CLPX-LIKE, MITOCHONDRIAL-RELATED"/>
    <property type="match status" value="1"/>
</dbReference>
<dbReference type="PANTHER" id="PTHR48102:SF3">
    <property type="entry name" value="ATP-DEPENDENT PROTEASE ATPASE SUBUNIT HSLU"/>
    <property type="match status" value="1"/>
</dbReference>
<dbReference type="Pfam" id="PF00004">
    <property type="entry name" value="AAA"/>
    <property type="match status" value="1"/>
</dbReference>
<dbReference type="Pfam" id="PF07724">
    <property type="entry name" value="AAA_2"/>
    <property type="match status" value="1"/>
</dbReference>
<dbReference type="Pfam" id="PF10431">
    <property type="entry name" value="ClpB_D2-small"/>
    <property type="match status" value="1"/>
</dbReference>
<dbReference type="SMART" id="SM00382">
    <property type="entry name" value="AAA"/>
    <property type="match status" value="1"/>
</dbReference>
<dbReference type="SMART" id="SM01086">
    <property type="entry name" value="ClpB_D2-small"/>
    <property type="match status" value="1"/>
</dbReference>
<dbReference type="SUPFAM" id="SSF52540">
    <property type="entry name" value="P-loop containing nucleoside triphosphate hydrolases"/>
    <property type="match status" value="1"/>
</dbReference>
<gene>
    <name evidence="1" type="primary">hslU</name>
    <name type="ordered locus">BcerKBAB4_3652</name>
</gene>
<proteinExistence type="inferred from homology"/>
<name>HSLU_BACMK</name>
<organism>
    <name type="scientific">Bacillus mycoides (strain KBAB4)</name>
    <name type="common">Bacillus weihenstephanensis</name>
    <dbReference type="NCBI Taxonomy" id="315730"/>
    <lineage>
        <taxon>Bacteria</taxon>
        <taxon>Bacillati</taxon>
        <taxon>Bacillota</taxon>
        <taxon>Bacilli</taxon>
        <taxon>Bacillales</taxon>
        <taxon>Bacillaceae</taxon>
        <taxon>Bacillus</taxon>
        <taxon>Bacillus cereus group</taxon>
    </lineage>
</organism>
<feature type="chain" id="PRO_1000100934" description="ATP-dependent protease ATPase subunit HslU">
    <location>
        <begin position="1"/>
        <end position="463"/>
    </location>
</feature>
<feature type="region of interest" description="Disordered" evidence="2">
    <location>
        <begin position="154"/>
        <end position="175"/>
    </location>
</feature>
<feature type="compositionally biased region" description="Polar residues" evidence="2">
    <location>
        <begin position="156"/>
        <end position="165"/>
    </location>
</feature>
<feature type="binding site" evidence="1">
    <location>
        <position position="19"/>
    </location>
    <ligand>
        <name>ATP</name>
        <dbReference type="ChEBI" id="CHEBI:30616"/>
    </ligand>
</feature>
<feature type="binding site" evidence="1">
    <location>
        <begin position="61"/>
        <end position="66"/>
    </location>
    <ligand>
        <name>ATP</name>
        <dbReference type="ChEBI" id="CHEBI:30616"/>
    </ligand>
</feature>
<feature type="binding site" evidence="1">
    <location>
        <position position="277"/>
    </location>
    <ligand>
        <name>ATP</name>
        <dbReference type="ChEBI" id="CHEBI:30616"/>
    </ligand>
</feature>
<feature type="binding site" evidence="1">
    <location>
        <position position="341"/>
    </location>
    <ligand>
        <name>ATP</name>
        <dbReference type="ChEBI" id="CHEBI:30616"/>
    </ligand>
</feature>
<feature type="binding site" evidence="1">
    <location>
        <position position="413"/>
    </location>
    <ligand>
        <name>ATP</name>
        <dbReference type="ChEBI" id="CHEBI:30616"/>
    </ligand>
</feature>
<reference key="1">
    <citation type="journal article" date="2008" name="Chem. Biol. Interact.">
        <title>Extending the Bacillus cereus group genomics to putative food-borne pathogens of different toxicity.</title>
        <authorList>
            <person name="Lapidus A."/>
            <person name="Goltsman E."/>
            <person name="Auger S."/>
            <person name="Galleron N."/>
            <person name="Segurens B."/>
            <person name="Dossat C."/>
            <person name="Land M.L."/>
            <person name="Broussolle V."/>
            <person name="Brillard J."/>
            <person name="Guinebretiere M.-H."/>
            <person name="Sanchis V."/>
            <person name="Nguen-the C."/>
            <person name="Lereclus D."/>
            <person name="Richardson P."/>
            <person name="Wincker P."/>
            <person name="Weissenbach J."/>
            <person name="Ehrlich S.D."/>
            <person name="Sorokin A."/>
        </authorList>
    </citation>
    <scope>NUCLEOTIDE SEQUENCE [LARGE SCALE GENOMIC DNA]</scope>
    <source>
        <strain>KBAB4</strain>
    </source>
</reference>
<protein>
    <recommendedName>
        <fullName evidence="1">ATP-dependent protease ATPase subunit HslU</fullName>
    </recommendedName>
    <alternativeName>
        <fullName evidence="1">Unfoldase HslU</fullName>
    </alternativeName>
</protein>
<comment type="function">
    <text evidence="1">ATPase subunit of a proteasome-like degradation complex; this subunit has chaperone activity. The binding of ATP and its subsequent hydrolysis by HslU are essential for unfolding of protein substrates subsequently hydrolyzed by HslV. HslU recognizes the N-terminal part of its protein substrates and unfolds these before they are guided to HslV for hydrolysis.</text>
</comment>
<comment type="subunit">
    <text evidence="1">A double ring-shaped homohexamer of HslV is capped on each side by a ring-shaped HslU homohexamer. The assembly of the HslU/HslV complex is dependent on binding of ATP.</text>
</comment>
<comment type="subcellular location">
    <subcellularLocation>
        <location evidence="1">Cytoplasm</location>
    </subcellularLocation>
</comment>
<comment type="similarity">
    <text evidence="1">Belongs to the ClpX chaperone family. HslU subfamily.</text>
</comment>
<sequence length="463" mass="52146">MHLHFTPRQIVEKLDQYIIGQKDAKKAVAVALRNRYRRSKLVENLRDEIAPKNILMIGPTGVGKTEVARRMAKLVGAPFIKVEATKFTEVGYVGRDVESMVRDLVETSVRIVKEEMVVKVQDKAEEQANQRLVEILVPSPEKQSGFKNPLEMLFGGNQNSNQTSDAQEDDEIEKKRQDVERKLAAGLLEDEVISIEVTEQQSSMFDMLQGTGMEQMGMNFQDALGSIMPKKTKKRKLSVKEARKLLTNEEAQRLIDMDEVTQEAVYRAEQLGIIFIDEIDKIAGKQSNSVDVSREGVQRDILPIVEGSNVATKYGSVKTDYILFVAAGAFHMSKPSDLIPELQGRFPIRVELTKLSADDFVKILIEPDNALIKQYTALLATEGIEIEFSDEAIRKIAEIAYQVNQDTDNIGARRLHTVMEKLLEDLSFEASEITLEKITITPQYVEEKLATIAKNKDVSQFIL</sequence>